<reference key="1">
    <citation type="journal article" date="1991" name="Comp. Biochem. Physiol.">
        <title>cDNA cloning, sequencing and temporal expression of the protease responsible for vitellin degradation in the silkworm, Bombyx mori.</title>
        <authorList>
            <person name="Ikeda M."/>
            <person name="Yaginuma T."/>
            <person name="Kobayashi M."/>
            <person name="Yamashita O."/>
        </authorList>
    </citation>
    <scope>NUCLEOTIDE SEQUENCE [GENOMIC DNA / MRNA]</scope>
    <source>
        <strain>N4</strain>
        <tissue>Egg</tissue>
    </source>
</reference>
<reference key="2">
    <citation type="journal article" date="1990" name="Insect Biochem.">
        <title>Purification and characterization of proteases responsible for vitellin degradation of the silkworm, Bombyx mori.</title>
        <authorList>
            <person name="Ikeda M."/>
            <person name="Sasaki T."/>
            <person name="Yamashita O."/>
        </authorList>
    </citation>
    <scope>PARTIAL PROTEIN SEQUENCE</scope>
    <source>
        <strain>Shunrei X Shogetu</strain>
        <tissue>Egg</tissue>
    </source>
</reference>
<dbReference type="EC" id="3.4.21.-"/>
<dbReference type="EMBL" id="D16232">
    <property type="protein sequence ID" value="BAA03757.1"/>
    <property type="molecule type" value="mRNA"/>
</dbReference>
<dbReference type="EMBL" id="D16233">
    <property type="protein sequence ID" value="BAA03758.1"/>
    <property type="molecule type" value="Genomic_DNA"/>
</dbReference>
<dbReference type="PIR" id="S32794">
    <property type="entry name" value="S32794"/>
</dbReference>
<dbReference type="RefSeq" id="NP_001037317.1">
    <property type="nucleotide sequence ID" value="NM_001043852.1"/>
</dbReference>
<dbReference type="SMR" id="Q07943"/>
<dbReference type="FunCoup" id="Q07943">
    <property type="interactions" value="29"/>
</dbReference>
<dbReference type="STRING" id="7091.Q07943"/>
<dbReference type="MEROPS" id="S01.113"/>
<dbReference type="PaxDb" id="7091-BGIBMGA013836-TA"/>
<dbReference type="EnsemblMetazoa" id="NM_001043852.1">
    <property type="protein sequence ID" value="NP_001037317.1"/>
    <property type="gene ID" value="LOC692746"/>
</dbReference>
<dbReference type="GeneID" id="692746"/>
<dbReference type="KEGG" id="bmor:692746"/>
<dbReference type="eggNOG" id="KOG1192">
    <property type="taxonomic scope" value="Eukaryota"/>
</dbReference>
<dbReference type="eggNOG" id="KOG3627">
    <property type="taxonomic scope" value="Eukaryota"/>
</dbReference>
<dbReference type="InParanoid" id="Q07943"/>
<dbReference type="OrthoDB" id="387201at7088"/>
<dbReference type="Proteomes" id="UP000005204">
    <property type="component" value="Unassembled WGS sequence"/>
</dbReference>
<dbReference type="GO" id="GO:0004252">
    <property type="term" value="F:serine-type endopeptidase activity"/>
    <property type="evidence" value="ECO:0007669"/>
    <property type="project" value="InterPro"/>
</dbReference>
<dbReference type="GO" id="GO:0006508">
    <property type="term" value="P:proteolysis"/>
    <property type="evidence" value="ECO:0007669"/>
    <property type="project" value="UniProtKB-KW"/>
</dbReference>
<dbReference type="CDD" id="cd00190">
    <property type="entry name" value="Tryp_SPc"/>
    <property type="match status" value="1"/>
</dbReference>
<dbReference type="FunFam" id="2.40.10.10:FF:000077">
    <property type="entry name" value="Predicted protein"/>
    <property type="match status" value="1"/>
</dbReference>
<dbReference type="Gene3D" id="2.40.10.10">
    <property type="entry name" value="Trypsin-like serine proteases"/>
    <property type="match status" value="1"/>
</dbReference>
<dbReference type="InterPro" id="IPR050430">
    <property type="entry name" value="Peptidase_S1"/>
</dbReference>
<dbReference type="InterPro" id="IPR009003">
    <property type="entry name" value="Peptidase_S1_PA"/>
</dbReference>
<dbReference type="InterPro" id="IPR043504">
    <property type="entry name" value="Peptidase_S1_PA_chymotrypsin"/>
</dbReference>
<dbReference type="InterPro" id="IPR001314">
    <property type="entry name" value="Peptidase_S1A"/>
</dbReference>
<dbReference type="InterPro" id="IPR001254">
    <property type="entry name" value="Trypsin_dom"/>
</dbReference>
<dbReference type="InterPro" id="IPR018114">
    <property type="entry name" value="TRYPSIN_HIS"/>
</dbReference>
<dbReference type="InterPro" id="IPR033116">
    <property type="entry name" value="TRYPSIN_SER"/>
</dbReference>
<dbReference type="PANTHER" id="PTHR24276:SF91">
    <property type="entry name" value="AT26814P-RELATED"/>
    <property type="match status" value="1"/>
</dbReference>
<dbReference type="PANTHER" id="PTHR24276">
    <property type="entry name" value="POLYSERASE-RELATED"/>
    <property type="match status" value="1"/>
</dbReference>
<dbReference type="Pfam" id="PF00089">
    <property type="entry name" value="Trypsin"/>
    <property type="match status" value="1"/>
</dbReference>
<dbReference type="PRINTS" id="PR00722">
    <property type="entry name" value="CHYMOTRYPSIN"/>
</dbReference>
<dbReference type="SMART" id="SM00020">
    <property type="entry name" value="Tryp_SPc"/>
    <property type="match status" value="1"/>
</dbReference>
<dbReference type="SUPFAM" id="SSF50494">
    <property type="entry name" value="Trypsin-like serine proteases"/>
    <property type="match status" value="1"/>
</dbReference>
<dbReference type="PROSITE" id="PS50240">
    <property type="entry name" value="TRYPSIN_DOM"/>
    <property type="match status" value="1"/>
</dbReference>
<dbReference type="PROSITE" id="PS00134">
    <property type="entry name" value="TRYPSIN_HIS"/>
    <property type="match status" value="1"/>
</dbReference>
<dbReference type="PROSITE" id="PS00135">
    <property type="entry name" value="TRYPSIN_SER"/>
    <property type="match status" value="1"/>
</dbReference>
<name>VDP_BOMMO</name>
<feature type="signal peptide" evidence="2">
    <location>
        <begin position="1"/>
        <end position="15"/>
    </location>
</feature>
<feature type="propeptide" id="PRO_0000028442" description="Activation peptide" evidence="2">
    <location>
        <begin position="16"/>
        <end position="27"/>
    </location>
</feature>
<feature type="chain" id="PRO_0000028443" description="Beta-VTN protease">
    <location>
        <begin position="28"/>
        <end position="264"/>
    </location>
</feature>
<feature type="chain" id="PRO_0000028444" description="Alpha-VTN protease chain 1" evidence="2">
    <location>
        <begin position="28"/>
        <end position="89"/>
    </location>
</feature>
<feature type="chain" id="PRO_0000028445" description="Alpha-VTN protease chain 2" evidence="2">
    <location>
        <begin position="90"/>
        <end position="264"/>
    </location>
</feature>
<feature type="domain" description="Peptidase S1" evidence="3">
    <location>
        <begin position="28"/>
        <end position="253"/>
    </location>
</feature>
<feature type="active site" description="Charge relay system" evidence="1">
    <location>
        <position position="68"/>
    </location>
</feature>
<feature type="active site" description="Charge relay system" evidence="1">
    <location>
        <position position="113"/>
    </location>
</feature>
<feature type="active site" description="Charge relay system" evidence="1">
    <location>
        <position position="209"/>
    </location>
</feature>
<feature type="binding site" evidence="1">
    <location>
        <position position="203"/>
    </location>
    <ligand>
        <name>substrate</name>
    </ligand>
</feature>
<feature type="glycosylation site" description="N-linked (GlcNAc...) asparagine" evidence="2">
    <location>
        <position position="251"/>
    </location>
</feature>
<feature type="disulfide bond" evidence="3">
    <location>
        <begin position="53"/>
        <end position="69"/>
    </location>
</feature>
<feature type="disulfide bond" evidence="3">
    <location>
        <begin position="178"/>
        <end position="194"/>
    </location>
</feature>
<feature type="disulfide bond" evidence="3">
    <location>
        <begin position="205"/>
        <end position="229"/>
    </location>
</feature>
<feature type="sequence conflict" description="In Ref. 2; AA sequence." evidence="4" ref="2">
    <original>Y</original>
    <variation>T</variation>
    <location>
        <position position="41"/>
    </location>
</feature>
<feature type="sequence conflict" description="In Ref. 2; AA sequence." evidence="4" ref="2">
    <original>T</original>
    <variation>S</variation>
    <location>
        <position position="56"/>
    </location>
</feature>
<feature type="sequence conflict" description="In Ref. 2; AA sequence." evidence="4" ref="2">
    <original>Y</original>
    <variation>T</variation>
    <location>
        <position position="94"/>
    </location>
</feature>
<accession>Q07943</accession>
<keyword id="KW-0903">Direct protein sequencing</keyword>
<keyword id="KW-1015">Disulfide bond</keyword>
<keyword id="KW-0325">Glycoprotein</keyword>
<keyword id="KW-0378">Hydrolase</keyword>
<keyword id="KW-0645">Protease</keyword>
<keyword id="KW-1185">Reference proteome</keyword>
<keyword id="KW-0720">Serine protease</keyword>
<keyword id="KW-0732">Signal</keyword>
<keyword id="KW-0865">Zymogen</keyword>
<comment type="function">
    <text>Responsible for the degradation of vitellin in eggs at the head pigmentation stage.</text>
</comment>
<comment type="developmental stage">
    <text>Appears on egg day 7.5, becomes more active on day 8-8.5 and disappears on day 9.5.</text>
</comment>
<comment type="PTM">
    <text>Cleavage after Arg-27 leads to beta-VTN protease and subsequent cleavage after Arg-89 leads to alpha-VTN.</text>
</comment>
<comment type="similarity">
    <text evidence="3">Belongs to the peptidase S1 family.</text>
</comment>
<sequence>MTNSLLICFTILGLAASSPTKPIGDIRIVGGEDIVITEAPYQVSVMFRGAHSCGGTLVAADIVVTAAHCVMSFAPEDYRIRVGSSFHQRDGMLYDVGDLAWHPDFNFASMDNDIAILWLPKPVMFGDTVEAIEMVETNSEIPDGDITIVTGWGHMEEGGGNPSVLQRVIVPKINEAACAEAYSPIYAITPRMLCAGTPEGGKDACQGDSGGPLVHKKKLAGIVSWGLGCARPEYPGVYTKVSALREWVDENITNLRLKHILRRF</sequence>
<protein>
    <recommendedName>
        <fullName>Vitellin-degrading protease</fullName>
        <ecNumber>3.4.21.-</ecNumber>
    </recommendedName>
    <component>
        <recommendedName>
            <fullName>Beta-VTN protease</fullName>
        </recommendedName>
    </component>
    <component>
        <recommendedName>
            <fullName>Alpha-VTN protease chain 1</fullName>
        </recommendedName>
    </component>
    <component>
        <recommendedName>
            <fullName>Alpha-VTN protease chain 2</fullName>
        </recommendedName>
    </component>
</protein>
<proteinExistence type="evidence at protein level"/>
<organism>
    <name type="scientific">Bombyx mori</name>
    <name type="common">Silk moth</name>
    <dbReference type="NCBI Taxonomy" id="7091"/>
    <lineage>
        <taxon>Eukaryota</taxon>
        <taxon>Metazoa</taxon>
        <taxon>Ecdysozoa</taxon>
        <taxon>Arthropoda</taxon>
        <taxon>Hexapoda</taxon>
        <taxon>Insecta</taxon>
        <taxon>Pterygota</taxon>
        <taxon>Neoptera</taxon>
        <taxon>Endopterygota</taxon>
        <taxon>Lepidoptera</taxon>
        <taxon>Glossata</taxon>
        <taxon>Ditrysia</taxon>
        <taxon>Bombycoidea</taxon>
        <taxon>Bombycidae</taxon>
        <taxon>Bombycinae</taxon>
        <taxon>Bombyx</taxon>
    </lineage>
</organism>
<evidence type="ECO:0000250" key="1"/>
<evidence type="ECO:0000255" key="2"/>
<evidence type="ECO:0000255" key="3">
    <source>
        <dbReference type="PROSITE-ProRule" id="PRU00274"/>
    </source>
</evidence>
<evidence type="ECO:0000305" key="4"/>